<sequence length="333" mass="35630">MMQHLFEKLFRAESMSQEESQQLFAAIVRGELEPSQLAAVLISMKVRGETPAEIAGAAQALLADAQHFPRPDYLFADIVGTGGDGTNSINISTASAFVAASCGVKVAKHGNRSVSSRSGSSDLLAAFGIRLDMSAEQSRLALDDLGVCFLFAPQYHTGFRHAMPVRQQLKTRTLFNVLGPLINPARPPLALIGVYSPELVLPIAQTLKVLGYQRAAVVHGGGMDEVAIHAPTQVAELNNGSIESYQLTPEDFGLNRYPLAALQGGMPEENRDILARLLQGKGETAHAAAVAANVALLLKLYGQENLRHNAQQALEMIHSGQAFDRVTALAARG</sequence>
<reference key="1">
    <citation type="journal article" date="2007" name="PLoS Genet.">
        <title>The complete genome sequence of Yersinia pseudotuberculosis IP31758, the causative agent of Far East scarlet-like fever.</title>
        <authorList>
            <person name="Eppinger M."/>
            <person name="Rosovitz M.J."/>
            <person name="Fricke W.F."/>
            <person name="Rasko D.A."/>
            <person name="Kokorina G."/>
            <person name="Fayolle C."/>
            <person name="Lindler L.E."/>
            <person name="Carniel E."/>
            <person name="Ravel J."/>
        </authorList>
    </citation>
    <scope>NUCLEOTIDE SEQUENCE [LARGE SCALE GENOMIC DNA]</scope>
    <source>
        <strain>IP 31758</strain>
    </source>
</reference>
<dbReference type="EC" id="2.4.2.18" evidence="1"/>
<dbReference type="EMBL" id="CP000720">
    <property type="protein sequence ID" value="ABS47738.1"/>
    <property type="molecule type" value="Genomic_DNA"/>
</dbReference>
<dbReference type="SMR" id="A7FI31"/>
<dbReference type="KEGG" id="ypi:YpsIP31758_1934"/>
<dbReference type="HOGENOM" id="CLU_034315_2_1_6"/>
<dbReference type="UniPathway" id="UPA00035">
    <property type="reaction ID" value="UER00041"/>
</dbReference>
<dbReference type="Proteomes" id="UP000002412">
    <property type="component" value="Chromosome"/>
</dbReference>
<dbReference type="GO" id="GO:0005829">
    <property type="term" value="C:cytosol"/>
    <property type="evidence" value="ECO:0007669"/>
    <property type="project" value="TreeGrafter"/>
</dbReference>
<dbReference type="GO" id="GO:0004048">
    <property type="term" value="F:anthranilate phosphoribosyltransferase activity"/>
    <property type="evidence" value="ECO:0007669"/>
    <property type="project" value="UniProtKB-UniRule"/>
</dbReference>
<dbReference type="GO" id="GO:0000287">
    <property type="term" value="F:magnesium ion binding"/>
    <property type="evidence" value="ECO:0007669"/>
    <property type="project" value="UniProtKB-UniRule"/>
</dbReference>
<dbReference type="GO" id="GO:0000162">
    <property type="term" value="P:L-tryptophan biosynthetic process"/>
    <property type="evidence" value="ECO:0007669"/>
    <property type="project" value="UniProtKB-UniRule"/>
</dbReference>
<dbReference type="FunFam" id="1.20.970.10:FF:000003">
    <property type="entry name" value="Anthranilate phosphoribosyltransferase"/>
    <property type="match status" value="1"/>
</dbReference>
<dbReference type="FunFam" id="3.40.1030.10:FF:000002">
    <property type="entry name" value="Anthranilate phosphoribosyltransferase"/>
    <property type="match status" value="1"/>
</dbReference>
<dbReference type="Gene3D" id="3.40.1030.10">
    <property type="entry name" value="Nucleoside phosphorylase/phosphoribosyltransferase catalytic domain"/>
    <property type="match status" value="1"/>
</dbReference>
<dbReference type="Gene3D" id="1.20.970.10">
    <property type="entry name" value="Transferase, Pyrimidine Nucleoside Phosphorylase, Chain C"/>
    <property type="match status" value="1"/>
</dbReference>
<dbReference type="HAMAP" id="MF_00211">
    <property type="entry name" value="TrpD"/>
    <property type="match status" value="1"/>
</dbReference>
<dbReference type="InterPro" id="IPR005940">
    <property type="entry name" value="Anthranilate_Pribosyl_Tfrase"/>
</dbReference>
<dbReference type="InterPro" id="IPR000312">
    <property type="entry name" value="Glycosyl_Trfase_fam3"/>
</dbReference>
<dbReference type="InterPro" id="IPR017459">
    <property type="entry name" value="Glycosyl_Trfase_fam3_N_dom"/>
</dbReference>
<dbReference type="InterPro" id="IPR036320">
    <property type="entry name" value="Glycosyl_Trfase_fam3_N_dom_sf"/>
</dbReference>
<dbReference type="InterPro" id="IPR035902">
    <property type="entry name" value="Nuc_phospho_transferase"/>
</dbReference>
<dbReference type="NCBIfam" id="TIGR01245">
    <property type="entry name" value="trpD"/>
    <property type="match status" value="1"/>
</dbReference>
<dbReference type="PANTHER" id="PTHR43285">
    <property type="entry name" value="ANTHRANILATE PHOSPHORIBOSYLTRANSFERASE"/>
    <property type="match status" value="1"/>
</dbReference>
<dbReference type="PANTHER" id="PTHR43285:SF2">
    <property type="entry name" value="ANTHRANILATE PHOSPHORIBOSYLTRANSFERASE"/>
    <property type="match status" value="1"/>
</dbReference>
<dbReference type="Pfam" id="PF02885">
    <property type="entry name" value="Glycos_trans_3N"/>
    <property type="match status" value="1"/>
</dbReference>
<dbReference type="Pfam" id="PF00591">
    <property type="entry name" value="Glycos_transf_3"/>
    <property type="match status" value="1"/>
</dbReference>
<dbReference type="SUPFAM" id="SSF52418">
    <property type="entry name" value="Nucleoside phosphorylase/phosphoribosyltransferase catalytic domain"/>
    <property type="match status" value="1"/>
</dbReference>
<dbReference type="SUPFAM" id="SSF47648">
    <property type="entry name" value="Nucleoside phosphorylase/phosphoribosyltransferase N-terminal domain"/>
    <property type="match status" value="1"/>
</dbReference>
<feature type="chain" id="PRO_1000058625" description="Anthranilate phosphoribosyltransferase">
    <location>
        <begin position="1"/>
        <end position="333"/>
    </location>
</feature>
<feature type="binding site" evidence="1">
    <location>
        <position position="80"/>
    </location>
    <ligand>
        <name>5-phospho-alpha-D-ribose 1-diphosphate</name>
        <dbReference type="ChEBI" id="CHEBI:58017"/>
    </ligand>
</feature>
<feature type="binding site" evidence="1">
    <location>
        <position position="80"/>
    </location>
    <ligand>
        <name>anthranilate</name>
        <dbReference type="ChEBI" id="CHEBI:16567"/>
        <label>1</label>
    </ligand>
</feature>
<feature type="binding site" evidence="1">
    <location>
        <begin position="83"/>
        <end position="84"/>
    </location>
    <ligand>
        <name>5-phospho-alpha-D-ribose 1-diphosphate</name>
        <dbReference type="ChEBI" id="CHEBI:58017"/>
    </ligand>
</feature>
<feature type="binding site" evidence="1">
    <location>
        <position position="88"/>
    </location>
    <ligand>
        <name>5-phospho-alpha-D-ribose 1-diphosphate</name>
        <dbReference type="ChEBI" id="CHEBI:58017"/>
    </ligand>
</feature>
<feature type="binding site" evidence="1">
    <location>
        <begin position="90"/>
        <end position="93"/>
    </location>
    <ligand>
        <name>5-phospho-alpha-D-ribose 1-diphosphate</name>
        <dbReference type="ChEBI" id="CHEBI:58017"/>
    </ligand>
</feature>
<feature type="binding site" evidence="1">
    <location>
        <position position="92"/>
    </location>
    <ligand>
        <name>Mg(2+)</name>
        <dbReference type="ChEBI" id="CHEBI:18420"/>
        <label>1</label>
    </ligand>
</feature>
<feature type="binding site" evidence="1">
    <location>
        <begin position="108"/>
        <end position="116"/>
    </location>
    <ligand>
        <name>5-phospho-alpha-D-ribose 1-diphosphate</name>
        <dbReference type="ChEBI" id="CHEBI:58017"/>
    </ligand>
</feature>
<feature type="binding site" evidence="1">
    <location>
        <position position="111"/>
    </location>
    <ligand>
        <name>anthranilate</name>
        <dbReference type="ChEBI" id="CHEBI:16567"/>
        <label>1</label>
    </ligand>
</feature>
<feature type="binding site" evidence="1">
    <location>
        <position position="120"/>
    </location>
    <ligand>
        <name>5-phospho-alpha-D-ribose 1-diphosphate</name>
        <dbReference type="ChEBI" id="CHEBI:58017"/>
    </ligand>
</feature>
<feature type="binding site" evidence="1">
    <location>
        <position position="166"/>
    </location>
    <ligand>
        <name>anthranilate</name>
        <dbReference type="ChEBI" id="CHEBI:16567"/>
        <label>2</label>
    </ligand>
</feature>
<feature type="binding site" evidence="1">
    <location>
        <position position="224"/>
    </location>
    <ligand>
        <name>Mg(2+)</name>
        <dbReference type="ChEBI" id="CHEBI:18420"/>
        <label>2</label>
    </ligand>
</feature>
<feature type="binding site" evidence="1">
    <location>
        <position position="225"/>
    </location>
    <ligand>
        <name>Mg(2+)</name>
        <dbReference type="ChEBI" id="CHEBI:18420"/>
        <label>1</label>
    </ligand>
</feature>
<feature type="binding site" evidence="1">
    <location>
        <position position="225"/>
    </location>
    <ligand>
        <name>Mg(2+)</name>
        <dbReference type="ChEBI" id="CHEBI:18420"/>
        <label>2</label>
    </ligand>
</feature>
<evidence type="ECO:0000255" key="1">
    <source>
        <dbReference type="HAMAP-Rule" id="MF_00211"/>
    </source>
</evidence>
<gene>
    <name evidence="1" type="primary">trpD</name>
    <name type="ordered locus">YpsIP31758_1934</name>
</gene>
<keyword id="KW-0028">Amino-acid biosynthesis</keyword>
<keyword id="KW-0057">Aromatic amino acid biosynthesis</keyword>
<keyword id="KW-0328">Glycosyltransferase</keyword>
<keyword id="KW-0460">Magnesium</keyword>
<keyword id="KW-0479">Metal-binding</keyword>
<keyword id="KW-0808">Transferase</keyword>
<keyword id="KW-0822">Tryptophan biosynthesis</keyword>
<accession>A7FI31</accession>
<comment type="function">
    <text evidence="1">Catalyzes the transfer of the phosphoribosyl group of 5-phosphorylribose-1-pyrophosphate (PRPP) to anthranilate to yield N-(5'-phosphoribosyl)-anthranilate (PRA).</text>
</comment>
<comment type="catalytic activity">
    <reaction evidence="1">
        <text>N-(5-phospho-beta-D-ribosyl)anthranilate + diphosphate = 5-phospho-alpha-D-ribose 1-diphosphate + anthranilate</text>
        <dbReference type="Rhea" id="RHEA:11768"/>
        <dbReference type="ChEBI" id="CHEBI:16567"/>
        <dbReference type="ChEBI" id="CHEBI:18277"/>
        <dbReference type="ChEBI" id="CHEBI:33019"/>
        <dbReference type="ChEBI" id="CHEBI:58017"/>
        <dbReference type="EC" id="2.4.2.18"/>
    </reaction>
</comment>
<comment type="cofactor">
    <cofactor evidence="1">
        <name>Mg(2+)</name>
        <dbReference type="ChEBI" id="CHEBI:18420"/>
    </cofactor>
    <text evidence="1">Binds 2 magnesium ions per monomer.</text>
</comment>
<comment type="pathway">
    <text evidence="1">Amino-acid biosynthesis; L-tryptophan biosynthesis; L-tryptophan from chorismate: step 2/5.</text>
</comment>
<comment type="subunit">
    <text evidence="1">Homodimer.</text>
</comment>
<comment type="similarity">
    <text evidence="1">Belongs to the anthranilate phosphoribosyltransferase family.</text>
</comment>
<protein>
    <recommendedName>
        <fullName evidence="1">Anthranilate phosphoribosyltransferase</fullName>
        <ecNumber evidence="1">2.4.2.18</ecNumber>
    </recommendedName>
</protein>
<proteinExistence type="inferred from homology"/>
<organism>
    <name type="scientific">Yersinia pseudotuberculosis serotype O:1b (strain IP 31758)</name>
    <dbReference type="NCBI Taxonomy" id="349747"/>
    <lineage>
        <taxon>Bacteria</taxon>
        <taxon>Pseudomonadati</taxon>
        <taxon>Pseudomonadota</taxon>
        <taxon>Gammaproteobacteria</taxon>
        <taxon>Enterobacterales</taxon>
        <taxon>Yersiniaceae</taxon>
        <taxon>Yersinia</taxon>
    </lineage>
</organism>
<name>TRPD_YERP3</name>